<evidence type="ECO:0000255" key="1">
    <source>
        <dbReference type="HAMAP-Rule" id="MF_01351"/>
    </source>
</evidence>
<dbReference type="EC" id="7.1.1.-" evidence="1"/>
<dbReference type="EMBL" id="CP000384">
    <property type="protein sequence ID" value="ABG07683.1"/>
    <property type="molecule type" value="Genomic_DNA"/>
</dbReference>
<dbReference type="SMR" id="Q1BBQ1"/>
<dbReference type="KEGG" id="mmc:Mmcs_1572"/>
<dbReference type="HOGENOM" id="CLU_067218_4_0_11"/>
<dbReference type="BioCyc" id="MSP164756:G1G6O-1609-MONOMER"/>
<dbReference type="GO" id="GO:0005886">
    <property type="term" value="C:plasma membrane"/>
    <property type="evidence" value="ECO:0007669"/>
    <property type="project" value="UniProtKB-SubCell"/>
</dbReference>
<dbReference type="GO" id="GO:0051539">
    <property type="term" value="F:4 iron, 4 sulfur cluster binding"/>
    <property type="evidence" value="ECO:0007669"/>
    <property type="project" value="UniProtKB-KW"/>
</dbReference>
<dbReference type="GO" id="GO:0005506">
    <property type="term" value="F:iron ion binding"/>
    <property type="evidence" value="ECO:0007669"/>
    <property type="project" value="UniProtKB-UniRule"/>
</dbReference>
<dbReference type="GO" id="GO:0050136">
    <property type="term" value="F:NADH:ubiquinone reductase (non-electrogenic) activity"/>
    <property type="evidence" value="ECO:0007669"/>
    <property type="project" value="UniProtKB-UniRule"/>
</dbReference>
<dbReference type="GO" id="GO:0048038">
    <property type="term" value="F:quinone binding"/>
    <property type="evidence" value="ECO:0007669"/>
    <property type="project" value="UniProtKB-KW"/>
</dbReference>
<dbReference type="GO" id="GO:0009060">
    <property type="term" value="P:aerobic respiration"/>
    <property type="evidence" value="ECO:0007669"/>
    <property type="project" value="TreeGrafter"/>
</dbReference>
<dbReference type="FunFam" id="3.30.70.3270:FF:000007">
    <property type="entry name" value="NADH-quinone oxidoreductase subunit I"/>
    <property type="match status" value="1"/>
</dbReference>
<dbReference type="Gene3D" id="3.30.70.3270">
    <property type="match status" value="1"/>
</dbReference>
<dbReference type="HAMAP" id="MF_01351">
    <property type="entry name" value="NDH1_NuoI"/>
    <property type="match status" value="1"/>
</dbReference>
<dbReference type="InterPro" id="IPR017896">
    <property type="entry name" value="4Fe4S_Fe-S-bd"/>
</dbReference>
<dbReference type="InterPro" id="IPR017900">
    <property type="entry name" value="4Fe4S_Fe_S_CS"/>
</dbReference>
<dbReference type="InterPro" id="IPR010226">
    <property type="entry name" value="NADH_quinone_OxRdtase_chainI"/>
</dbReference>
<dbReference type="NCBIfam" id="TIGR01971">
    <property type="entry name" value="NuoI"/>
    <property type="match status" value="1"/>
</dbReference>
<dbReference type="NCBIfam" id="NF004537">
    <property type="entry name" value="PRK05888.1-3"/>
    <property type="match status" value="1"/>
</dbReference>
<dbReference type="PANTHER" id="PTHR10849:SF20">
    <property type="entry name" value="NADH DEHYDROGENASE [UBIQUINONE] IRON-SULFUR PROTEIN 8, MITOCHONDRIAL"/>
    <property type="match status" value="1"/>
</dbReference>
<dbReference type="PANTHER" id="PTHR10849">
    <property type="entry name" value="NADH DEHYDROGENASE UBIQUINONE IRON-SULFUR PROTEIN 8, MITOCHONDRIAL"/>
    <property type="match status" value="1"/>
</dbReference>
<dbReference type="Pfam" id="PF12838">
    <property type="entry name" value="Fer4_7"/>
    <property type="match status" value="1"/>
</dbReference>
<dbReference type="SUPFAM" id="SSF54862">
    <property type="entry name" value="4Fe-4S ferredoxins"/>
    <property type="match status" value="1"/>
</dbReference>
<dbReference type="PROSITE" id="PS00198">
    <property type="entry name" value="4FE4S_FER_1"/>
    <property type="match status" value="2"/>
</dbReference>
<dbReference type="PROSITE" id="PS51379">
    <property type="entry name" value="4FE4S_FER_2"/>
    <property type="match status" value="2"/>
</dbReference>
<protein>
    <recommendedName>
        <fullName evidence="1">NADH-quinone oxidoreductase subunit I</fullName>
        <ecNumber evidence="1">7.1.1.-</ecNumber>
    </recommendedName>
    <alternativeName>
        <fullName evidence="1">NADH dehydrogenase I subunit I</fullName>
    </alternativeName>
    <alternativeName>
        <fullName evidence="1">NDH-1 subunit I</fullName>
    </alternativeName>
</protein>
<keyword id="KW-0004">4Fe-4S</keyword>
<keyword id="KW-1003">Cell membrane</keyword>
<keyword id="KW-0408">Iron</keyword>
<keyword id="KW-0411">Iron-sulfur</keyword>
<keyword id="KW-0472">Membrane</keyword>
<keyword id="KW-0479">Metal-binding</keyword>
<keyword id="KW-0520">NAD</keyword>
<keyword id="KW-0874">Quinone</keyword>
<keyword id="KW-0677">Repeat</keyword>
<keyword id="KW-1278">Translocase</keyword>
<organism>
    <name type="scientific">Mycobacterium sp. (strain MCS)</name>
    <dbReference type="NCBI Taxonomy" id="164756"/>
    <lineage>
        <taxon>Bacteria</taxon>
        <taxon>Bacillati</taxon>
        <taxon>Actinomycetota</taxon>
        <taxon>Actinomycetes</taxon>
        <taxon>Mycobacteriales</taxon>
        <taxon>Mycobacteriaceae</taxon>
        <taxon>Mycobacterium</taxon>
    </lineage>
</organism>
<name>NUOI_MYCSS</name>
<comment type="function">
    <text evidence="1">NDH-1 shuttles electrons from NADH, via FMN and iron-sulfur (Fe-S) centers, to quinones in the respiratory chain. The immediate electron acceptor for the enzyme in this species is believed to be menaquinone. Couples the redox reaction to proton translocation (for every two electrons transferred, four hydrogen ions are translocated across the cytoplasmic membrane), and thus conserves the redox energy in a proton gradient.</text>
</comment>
<comment type="catalytic activity">
    <reaction evidence="1">
        <text>a quinone + NADH + 5 H(+)(in) = a quinol + NAD(+) + 4 H(+)(out)</text>
        <dbReference type="Rhea" id="RHEA:57888"/>
        <dbReference type="ChEBI" id="CHEBI:15378"/>
        <dbReference type="ChEBI" id="CHEBI:24646"/>
        <dbReference type="ChEBI" id="CHEBI:57540"/>
        <dbReference type="ChEBI" id="CHEBI:57945"/>
        <dbReference type="ChEBI" id="CHEBI:132124"/>
    </reaction>
</comment>
<comment type="cofactor">
    <cofactor evidence="1">
        <name>[4Fe-4S] cluster</name>
        <dbReference type="ChEBI" id="CHEBI:49883"/>
    </cofactor>
    <text evidence="1">Binds 2 [4Fe-4S] clusters per subunit.</text>
</comment>
<comment type="subunit">
    <text evidence="1">NDH-1 is composed of 14 different subunits. Subunits NuoA, H, J, K, L, M, N constitute the membrane sector of the complex.</text>
</comment>
<comment type="subcellular location">
    <subcellularLocation>
        <location evidence="1">Cell membrane</location>
        <topology evidence="1">Peripheral membrane protein</topology>
    </subcellularLocation>
</comment>
<comment type="similarity">
    <text evidence="1">Belongs to the complex I 23 kDa subunit family.</text>
</comment>
<sequence length="174" mass="19365">MPKLWDAVAGFAVTFGTLFKKPITEEYPEKPGPVAPRYHGRHQLNRYPDGLEKCIGCELCAWACPADAIYVEGDDNTADERYSPGERYGRVYQINYLRCIGCGLCIEACPTRALTMTNDYEMADDNRADLIWGKDKLLAPLQDGMLAPPHPMAPGATDDDYYLGRIGPATEDVR</sequence>
<gene>
    <name evidence="1" type="primary">nuoI</name>
    <name type="ordered locus">Mmcs_1572</name>
</gene>
<reference key="1">
    <citation type="submission" date="2006-06" db="EMBL/GenBank/DDBJ databases">
        <title>Complete sequence of chromosome of Mycobacterium sp. MCS.</title>
        <authorList>
            <consortium name="US DOE Joint Genome Institute"/>
            <person name="Copeland A."/>
            <person name="Lucas S."/>
            <person name="Lapidus A."/>
            <person name="Barry K."/>
            <person name="Detter J.C."/>
            <person name="Glavina del Rio T."/>
            <person name="Hammon N."/>
            <person name="Israni S."/>
            <person name="Dalin E."/>
            <person name="Tice H."/>
            <person name="Pitluck S."/>
            <person name="Martinez M."/>
            <person name="Schmutz J."/>
            <person name="Larimer F."/>
            <person name="Land M."/>
            <person name="Hauser L."/>
            <person name="Kyrpides N."/>
            <person name="Kim E."/>
            <person name="Miller C.D."/>
            <person name="Hughes J.E."/>
            <person name="Anderson A.J."/>
            <person name="Sims R.C."/>
            <person name="Richardson P."/>
        </authorList>
    </citation>
    <scope>NUCLEOTIDE SEQUENCE [LARGE SCALE GENOMIC DNA]</scope>
    <source>
        <strain>MCS</strain>
    </source>
</reference>
<accession>Q1BBQ1</accession>
<feature type="chain" id="PRO_0000298517" description="NADH-quinone oxidoreductase subunit I">
    <location>
        <begin position="1"/>
        <end position="174"/>
    </location>
</feature>
<feature type="domain" description="4Fe-4S ferredoxin-type 1" evidence="1">
    <location>
        <begin position="44"/>
        <end position="74"/>
    </location>
</feature>
<feature type="domain" description="4Fe-4S ferredoxin-type 2" evidence="1">
    <location>
        <begin position="90"/>
        <end position="119"/>
    </location>
</feature>
<feature type="binding site" evidence="1">
    <location>
        <position position="54"/>
    </location>
    <ligand>
        <name>[4Fe-4S] cluster</name>
        <dbReference type="ChEBI" id="CHEBI:49883"/>
        <label>1</label>
    </ligand>
</feature>
<feature type="binding site" evidence="1">
    <location>
        <position position="57"/>
    </location>
    <ligand>
        <name>[4Fe-4S] cluster</name>
        <dbReference type="ChEBI" id="CHEBI:49883"/>
        <label>1</label>
    </ligand>
</feature>
<feature type="binding site" evidence="1">
    <location>
        <position position="60"/>
    </location>
    <ligand>
        <name>[4Fe-4S] cluster</name>
        <dbReference type="ChEBI" id="CHEBI:49883"/>
        <label>1</label>
    </ligand>
</feature>
<feature type="binding site" evidence="1">
    <location>
        <position position="64"/>
    </location>
    <ligand>
        <name>[4Fe-4S] cluster</name>
        <dbReference type="ChEBI" id="CHEBI:49883"/>
        <label>2</label>
    </ligand>
</feature>
<feature type="binding site" evidence="1">
    <location>
        <position position="99"/>
    </location>
    <ligand>
        <name>[4Fe-4S] cluster</name>
        <dbReference type="ChEBI" id="CHEBI:49883"/>
        <label>2</label>
    </ligand>
</feature>
<feature type="binding site" evidence="1">
    <location>
        <position position="102"/>
    </location>
    <ligand>
        <name>[4Fe-4S] cluster</name>
        <dbReference type="ChEBI" id="CHEBI:49883"/>
        <label>2</label>
    </ligand>
</feature>
<feature type="binding site" evidence="1">
    <location>
        <position position="105"/>
    </location>
    <ligand>
        <name>[4Fe-4S] cluster</name>
        <dbReference type="ChEBI" id="CHEBI:49883"/>
        <label>2</label>
    </ligand>
</feature>
<feature type="binding site" evidence="1">
    <location>
        <position position="109"/>
    </location>
    <ligand>
        <name>[4Fe-4S] cluster</name>
        <dbReference type="ChEBI" id="CHEBI:49883"/>
        <label>1</label>
    </ligand>
</feature>
<proteinExistence type="inferred from homology"/>